<proteinExistence type="evidence at protein level"/>
<evidence type="ECO:0000250" key="1">
    <source>
        <dbReference type="UniProtKB" id="P69940"/>
    </source>
</evidence>
<evidence type="ECO:0000255" key="2"/>
<evidence type="ECO:0000255" key="3">
    <source>
        <dbReference type="PROSITE-ProRule" id="PRU01209"/>
    </source>
</evidence>
<evidence type="ECO:0000269" key="4">
    <source>
    </source>
</evidence>
<evidence type="ECO:0000269" key="5">
    <source>
    </source>
</evidence>
<evidence type="ECO:0000303" key="6">
    <source>
    </source>
</evidence>
<evidence type="ECO:0000305" key="7"/>
<evidence type="ECO:0000305" key="8">
    <source>
    </source>
</evidence>
<protein>
    <recommendedName>
        <fullName evidence="8">Potassium channel toxin Tdi-beta-KTx</fullName>
        <shortName evidence="6">TdibetaKTx</shortName>
    </recommendedName>
</protein>
<reference key="1">
    <citation type="journal article" date="2007" name="Peptides">
        <title>Wide phylogenetic distribution of scorpine and long-chain beta-KTx-like peptides in scorpion venoms: identification of 'orphan' components.</title>
        <authorList>
            <person name="Diego-Garcia E."/>
            <person name="Schwartz E.F."/>
            <person name="D'Suze G."/>
            <person name="Gonzalez S.A."/>
            <person name="Batista C.V."/>
            <person name="Garcia B.I."/>
            <person name="Rodriguez de la Vega R.C."/>
            <person name="Possani L.D."/>
        </authorList>
    </citation>
    <scope>NUCLEOTIDE SEQUENCE [MRNA]</scope>
    <scope>PROTEIN SEQUENCE OF 28-74</scope>
    <scope>SUBCELLULAR LOCATION</scope>
    <source>
        <tissue>Venom</tissue>
        <tissue>Venom gland</tissue>
    </source>
</reference>
<reference key="2">
    <citation type="journal article" date="2009" name="Biochimie">
        <title>Molecular cloning and nucleotide sequence analysis of genes from a cDNA library of the scorpion Tityus discrepans.</title>
        <authorList>
            <person name="D'Suze G."/>
            <person name="Schwartz E.F."/>
            <person name="Garcia-Gomez B.I."/>
            <person name="Sevcik C."/>
            <person name="Possani L.D."/>
        </authorList>
    </citation>
    <scope>NUCLEOTIDE SEQUENCE [MRNA]</scope>
    <source>
        <tissue>Venom gland</tissue>
    </source>
</reference>
<reference key="3">
    <citation type="journal article" date="2006" name="Proteomics">
        <title>Proteomic analysis of Tityus discrepans scorpion venom and amino acid sequence of novel toxins.</title>
        <authorList>
            <person name="Batista C.V.F."/>
            <person name="D'Suze G."/>
            <person name="Gomez-Lagunas F."/>
            <person name="Zamudio F.Z."/>
            <person name="Encarnacion S."/>
            <person name="Sevcik C."/>
            <person name="Possani L.D."/>
        </authorList>
    </citation>
    <scope>MASS SPECTROMETRY</scope>
    <source>
        <tissue>Venom</tissue>
    </source>
</reference>
<dbReference type="EMBL" id="DQ465347">
    <property type="protein sequence ID" value="ABE98263.1"/>
    <property type="molecule type" value="mRNA"/>
</dbReference>
<dbReference type="SMR" id="Q0GY44"/>
<dbReference type="GO" id="GO:0005576">
    <property type="term" value="C:extracellular region"/>
    <property type="evidence" value="ECO:0007669"/>
    <property type="project" value="UniProtKB-SubCell"/>
</dbReference>
<dbReference type="GO" id="GO:0015459">
    <property type="term" value="F:potassium channel regulator activity"/>
    <property type="evidence" value="ECO:0007669"/>
    <property type="project" value="UniProtKB-KW"/>
</dbReference>
<dbReference type="GO" id="GO:0090729">
    <property type="term" value="F:toxin activity"/>
    <property type="evidence" value="ECO:0007669"/>
    <property type="project" value="UniProtKB-KW"/>
</dbReference>
<dbReference type="InterPro" id="IPR029237">
    <property type="entry name" value="Long_scorpion_toxin_alpha/beta"/>
</dbReference>
<dbReference type="Pfam" id="PF14866">
    <property type="entry name" value="Scorpion_toxin_alpha-beta"/>
    <property type="match status" value="1"/>
</dbReference>
<dbReference type="PROSITE" id="PS51862">
    <property type="entry name" value="BSPN_CSAB"/>
    <property type="match status" value="1"/>
</dbReference>
<feature type="signal peptide" evidence="2">
    <location>
        <begin position="1"/>
        <end position="19"/>
    </location>
</feature>
<feature type="propeptide" id="PRO_0000274676" evidence="5">
    <location>
        <begin position="20"/>
        <end position="27"/>
    </location>
</feature>
<feature type="chain" id="PRO_0000274677" description="Potassium channel toxin Tdi-beta-KTx" evidence="8">
    <location>
        <begin position="28"/>
        <end position="87"/>
    </location>
</feature>
<feature type="domain" description="BetaSPN-type CS-alpha/beta" evidence="3">
    <location>
        <begin position="53"/>
        <end position="87"/>
    </location>
</feature>
<feature type="disulfide bond" evidence="3">
    <location>
        <begin position="56"/>
        <end position="77"/>
    </location>
</feature>
<feature type="disulfide bond" evidence="3">
    <location>
        <begin position="63"/>
        <end position="82"/>
    </location>
</feature>
<feature type="disulfide bond" evidence="3">
    <location>
        <begin position="67"/>
        <end position="84"/>
    </location>
</feature>
<name>KBX1_TITDI</name>
<accession>Q0GY44</accession>
<keyword id="KW-0903">Direct protein sequencing</keyword>
<keyword id="KW-1015">Disulfide bond</keyword>
<keyword id="KW-0872">Ion channel impairing toxin</keyword>
<keyword id="KW-0528">Neurotoxin</keyword>
<keyword id="KW-0632">Potassium channel impairing toxin</keyword>
<keyword id="KW-0964">Secreted</keyword>
<keyword id="KW-0732">Signal</keyword>
<keyword id="KW-0800">Toxin</keyword>
<sequence length="87" mass="9833">MERKLALLLLLGMITLASSGLREKHVQKLVTLIPNDTLRSIMKTIVHKLAKTQFGCPAYEGYCMNHCQDIERHDGSCHGFKCKCEKS</sequence>
<organism>
    <name type="scientific">Tityus discrepans</name>
    <name type="common">Venezuelan scorpion</name>
    <dbReference type="NCBI Taxonomy" id="57059"/>
    <lineage>
        <taxon>Eukaryota</taxon>
        <taxon>Metazoa</taxon>
        <taxon>Ecdysozoa</taxon>
        <taxon>Arthropoda</taxon>
        <taxon>Chelicerata</taxon>
        <taxon>Arachnida</taxon>
        <taxon>Scorpiones</taxon>
        <taxon>Buthida</taxon>
        <taxon>Buthoidea</taxon>
        <taxon>Buthidae</taxon>
        <taxon>Tityus</taxon>
    </lineage>
</organism>
<comment type="function">
    <text evidence="1">Inhibits voltage-gated potassium channel.</text>
</comment>
<comment type="subcellular location">
    <subcellularLocation>
        <location evidence="5">Secreted</location>
    </subcellularLocation>
</comment>
<comment type="tissue specificity">
    <text evidence="8">Expressed by the venom gland.</text>
</comment>
<comment type="mass spectrometry" mass="6822.6" method="MALDI" evidence="4"/>
<comment type="similarity">
    <text evidence="7">Belongs to the long chain scorpion toxin family. Class 1 subfamily.</text>
</comment>